<reference key="1">
    <citation type="journal article" date="2000" name="Nature">
        <title>Complete genome sequence of Pseudomonas aeruginosa PAO1, an opportunistic pathogen.</title>
        <authorList>
            <person name="Stover C.K."/>
            <person name="Pham X.-Q.T."/>
            <person name="Erwin A.L."/>
            <person name="Mizoguchi S.D."/>
            <person name="Warrener P."/>
            <person name="Hickey M.J."/>
            <person name="Brinkman F.S.L."/>
            <person name="Hufnagle W.O."/>
            <person name="Kowalik D.J."/>
            <person name="Lagrou M."/>
            <person name="Garber R.L."/>
            <person name="Goltry L."/>
            <person name="Tolentino E."/>
            <person name="Westbrock-Wadman S."/>
            <person name="Yuan Y."/>
            <person name="Brody L.L."/>
            <person name="Coulter S.N."/>
            <person name="Folger K.R."/>
            <person name="Kas A."/>
            <person name="Larbig K."/>
            <person name="Lim R.M."/>
            <person name="Smith K.A."/>
            <person name="Spencer D.H."/>
            <person name="Wong G.K.-S."/>
            <person name="Wu Z."/>
            <person name="Paulsen I.T."/>
            <person name="Reizer J."/>
            <person name="Saier M.H. Jr."/>
            <person name="Hancock R.E.W."/>
            <person name="Lory S."/>
            <person name="Olson M.V."/>
        </authorList>
    </citation>
    <scope>NUCLEOTIDE SEQUENCE [LARGE SCALE GENOMIC DNA]</scope>
    <source>
        <strain>ATCC 15692 / DSM 22644 / CIP 104116 / JCM 14847 / LMG 12228 / 1C / PRS 101 / PAO1</strain>
    </source>
</reference>
<gene>
    <name type="primary">cyoA</name>
    <name type="ordered locus">PA1317</name>
</gene>
<keyword id="KW-0997">Cell inner membrane</keyword>
<keyword id="KW-1003">Cell membrane</keyword>
<keyword id="KW-0249">Electron transport</keyword>
<keyword id="KW-0449">Lipoprotein</keyword>
<keyword id="KW-0472">Membrane</keyword>
<keyword id="KW-0560">Oxidoreductase</keyword>
<keyword id="KW-0564">Palmitate</keyword>
<keyword id="KW-1185">Reference proteome</keyword>
<keyword id="KW-0679">Respiratory chain</keyword>
<keyword id="KW-0732">Signal</keyword>
<keyword id="KW-0812">Transmembrane</keyword>
<keyword id="KW-1133">Transmembrane helix</keyword>
<keyword id="KW-0813">Transport</keyword>
<dbReference type="EMBL" id="AE004091">
    <property type="protein sequence ID" value="AAG04706.1"/>
    <property type="molecule type" value="Genomic_DNA"/>
</dbReference>
<dbReference type="PIR" id="D83480">
    <property type="entry name" value="D83480"/>
</dbReference>
<dbReference type="RefSeq" id="NP_250008.1">
    <property type="nucleotide sequence ID" value="NC_002516.2"/>
</dbReference>
<dbReference type="RefSeq" id="WP_003082702.1">
    <property type="nucleotide sequence ID" value="NZ_QZGE01000005.1"/>
</dbReference>
<dbReference type="SMR" id="Q9I427"/>
<dbReference type="FunCoup" id="Q9I427">
    <property type="interactions" value="316"/>
</dbReference>
<dbReference type="STRING" id="208964.PA1317"/>
<dbReference type="PaxDb" id="208964-PA1317"/>
<dbReference type="DNASU" id="881513"/>
<dbReference type="GeneID" id="881513"/>
<dbReference type="KEGG" id="pae:PA1317"/>
<dbReference type="PATRIC" id="fig|208964.12.peg.1369"/>
<dbReference type="PseudoCAP" id="PA1317"/>
<dbReference type="HOGENOM" id="CLU_036876_6_1_6"/>
<dbReference type="InParanoid" id="Q9I427"/>
<dbReference type="OrthoDB" id="9783445at2"/>
<dbReference type="PhylomeDB" id="Q9I427"/>
<dbReference type="BioCyc" id="PAER208964:G1FZ6-1342-MONOMER"/>
<dbReference type="Proteomes" id="UP000002438">
    <property type="component" value="Chromosome"/>
</dbReference>
<dbReference type="GO" id="GO:0005886">
    <property type="term" value="C:plasma membrane"/>
    <property type="evidence" value="ECO:0007669"/>
    <property type="project" value="UniProtKB-SubCell"/>
</dbReference>
<dbReference type="GO" id="GO:0005507">
    <property type="term" value="F:copper ion binding"/>
    <property type="evidence" value="ECO:0007669"/>
    <property type="project" value="InterPro"/>
</dbReference>
<dbReference type="GO" id="GO:0009486">
    <property type="term" value="F:cytochrome bo3 ubiquinol oxidase activity"/>
    <property type="evidence" value="ECO:0007669"/>
    <property type="project" value="InterPro"/>
</dbReference>
<dbReference type="GO" id="GO:0004129">
    <property type="term" value="F:cytochrome-c oxidase activity"/>
    <property type="evidence" value="ECO:0007669"/>
    <property type="project" value="InterPro"/>
</dbReference>
<dbReference type="GO" id="GO:0016682">
    <property type="term" value="F:oxidoreductase activity, acting on diphenols and related substances as donors, oxygen as acceptor"/>
    <property type="evidence" value="ECO:0007669"/>
    <property type="project" value="InterPro"/>
</dbReference>
<dbReference type="GO" id="GO:0042773">
    <property type="term" value="P:ATP synthesis coupled electron transport"/>
    <property type="evidence" value="ECO:0000318"/>
    <property type="project" value="GO_Central"/>
</dbReference>
<dbReference type="CDD" id="cd04212">
    <property type="entry name" value="CuRO_UO_II"/>
    <property type="match status" value="1"/>
</dbReference>
<dbReference type="FunFam" id="1.10.287.90:FF:000002">
    <property type="entry name" value="Ubiquinol oxidase subunit 2"/>
    <property type="match status" value="1"/>
</dbReference>
<dbReference type="FunFam" id="2.60.40.420:FF:000008">
    <property type="entry name" value="Ubiquinol oxidase subunit 2"/>
    <property type="match status" value="1"/>
</dbReference>
<dbReference type="Gene3D" id="1.10.287.90">
    <property type="match status" value="1"/>
</dbReference>
<dbReference type="Gene3D" id="2.60.40.420">
    <property type="entry name" value="Cupredoxins - blue copper proteins"/>
    <property type="match status" value="1"/>
</dbReference>
<dbReference type="InterPro" id="IPR045187">
    <property type="entry name" value="CcO_II"/>
</dbReference>
<dbReference type="InterPro" id="IPR002429">
    <property type="entry name" value="CcO_II-like_C"/>
</dbReference>
<dbReference type="InterPro" id="IPR010514">
    <property type="entry name" value="COX_ARM"/>
</dbReference>
<dbReference type="InterPro" id="IPR008972">
    <property type="entry name" value="Cupredoxin"/>
</dbReference>
<dbReference type="InterPro" id="IPR034227">
    <property type="entry name" value="CuRO_UO_II"/>
</dbReference>
<dbReference type="InterPro" id="IPR011759">
    <property type="entry name" value="Cyt_c_oxidase_su2_TM_dom"/>
</dbReference>
<dbReference type="InterPro" id="IPR036257">
    <property type="entry name" value="Cyt_c_oxidase_su2_TM_sf"/>
</dbReference>
<dbReference type="InterPro" id="IPR006333">
    <property type="entry name" value="Cyt_o_ubiquinol_oxidase_su2"/>
</dbReference>
<dbReference type="NCBIfam" id="TIGR01433">
    <property type="entry name" value="CyoA"/>
    <property type="match status" value="1"/>
</dbReference>
<dbReference type="PANTHER" id="PTHR22888:SF18">
    <property type="entry name" value="CYTOCHROME BO(3) UBIQUINOL OXIDASE SUBUNIT 2"/>
    <property type="match status" value="1"/>
</dbReference>
<dbReference type="PANTHER" id="PTHR22888">
    <property type="entry name" value="CYTOCHROME C OXIDASE, SUBUNIT II"/>
    <property type="match status" value="1"/>
</dbReference>
<dbReference type="Pfam" id="PF00116">
    <property type="entry name" value="COX2"/>
    <property type="match status" value="1"/>
</dbReference>
<dbReference type="Pfam" id="PF06481">
    <property type="entry name" value="COX_ARM"/>
    <property type="match status" value="1"/>
</dbReference>
<dbReference type="PIRSF" id="PIRSF000292">
    <property type="entry name" value="Ubi_od_II"/>
    <property type="match status" value="1"/>
</dbReference>
<dbReference type="SUPFAM" id="SSF49503">
    <property type="entry name" value="Cupredoxins"/>
    <property type="match status" value="1"/>
</dbReference>
<dbReference type="SUPFAM" id="SSF81464">
    <property type="entry name" value="Cytochrome c oxidase subunit II-like, transmembrane region"/>
    <property type="match status" value="1"/>
</dbReference>
<dbReference type="PROSITE" id="PS50857">
    <property type="entry name" value="COX2_CUA"/>
    <property type="match status" value="1"/>
</dbReference>
<dbReference type="PROSITE" id="PS50999">
    <property type="entry name" value="COX2_TM"/>
    <property type="match status" value="1"/>
</dbReference>
<dbReference type="PROSITE" id="PS51257">
    <property type="entry name" value="PROKAR_LIPOPROTEIN"/>
    <property type="match status" value="1"/>
</dbReference>
<accession>Q9I427</accession>
<organism>
    <name type="scientific">Pseudomonas aeruginosa (strain ATCC 15692 / DSM 22644 / CIP 104116 / JCM 14847 / LMG 12228 / 1C / PRS 101 / PAO1)</name>
    <dbReference type="NCBI Taxonomy" id="208964"/>
    <lineage>
        <taxon>Bacteria</taxon>
        <taxon>Pseudomonadati</taxon>
        <taxon>Pseudomonadota</taxon>
        <taxon>Gammaproteobacteria</taxon>
        <taxon>Pseudomonadales</taxon>
        <taxon>Pseudomonadaceae</taxon>
        <taxon>Pseudomonas</taxon>
    </lineage>
</organism>
<comment type="function">
    <text evidence="1">Cytochrome bo(3) ubiquinol terminal oxidase is the component of the aerobic respiratory chain of E.coli that predominates when cells are grown at high aeration. Has proton pump activity across the membrane in addition to electron transfer, pumping 2 protons/electron (By similarity).</text>
</comment>
<comment type="subunit">
    <text evidence="1">Heterooctamer of two A chains, two B chains, two C chains and two D chains.</text>
</comment>
<comment type="subcellular location">
    <subcellularLocation>
        <location evidence="1">Cell inner membrane</location>
        <topology evidence="1">Multi-pass membrane protein</topology>
    </subcellularLocation>
</comment>
<comment type="similarity">
    <text evidence="4">Belongs to the cytochrome c oxidase subunit 2 family.</text>
</comment>
<name>CYOA_PSEAE</name>
<evidence type="ECO:0000250" key="1"/>
<evidence type="ECO:0000255" key="2"/>
<evidence type="ECO:0000255" key="3">
    <source>
        <dbReference type="PROSITE-ProRule" id="PRU00303"/>
    </source>
</evidence>
<evidence type="ECO:0000305" key="4"/>
<sequence length="331" mass="36623">MTKANPFAALKWLSLAPALLLGGCDMTLFNPKGQVGMDERTLIITATLLMLIVVIPVIVMTLAFAWKYRASNTQAEYKPDWHHSNRIEAVVWLVPCVIIAILGWITWESTHKLDPYRPLDSEVKPVTIQAVSLDWKWLFIYPEQGIATVNEIAFPKDTPVNFQITSDSVMNSFFIPQLGSQIYSMAGMMTKLHLIANEEGVFDGISANYSGGGFSGMRFKAIATSEQGFQDWVAKVKAAPASLSIGTYPELVKPSENVPPTYFSSVSPELFGHILTKYEHHGDAKGAAHGEHAGAEHEAAMTGHDMQDMDMQAMQGMKDMKDMHMQPSTQE</sequence>
<proteinExistence type="inferred from homology"/>
<protein>
    <recommendedName>
        <fullName>Cytochrome bo(3) ubiquinol oxidase subunit 2</fullName>
    </recommendedName>
    <alternativeName>
        <fullName>Cytochrome o ubiquinol oxidase subunit 2</fullName>
        <shortName>Cytochrome o subunit 2</shortName>
    </alternativeName>
    <alternativeName>
        <fullName>Oxidase bo(3) subunit 2</fullName>
    </alternativeName>
    <alternativeName>
        <fullName>Ubiquinol oxidase polypeptide II</fullName>
    </alternativeName>
    <alternativeName>
        <fullName>Ubiquinol oxidase subunit 2</fullName>
    </alternativeName>
</protein>
<feature type="signal peptide" evidence="3">
    <location>
        <begin position="1"/>
        <end position="23"/>
    </location>
</feature>
<feature type="chain" id="PRO_0000287756" description="Cytochrome bo(3) ubiquinol oxidase subunit 2">
    <location>
        <begin position="24"/>
        <end position="331"/>
    </location>
</feature>
<feature type="topological domain" description="Periplasmic" evidence="2">
    <location>
        <begin position="24"/>
        <end position="41"/>
    </location>
</feature>
<feature type="transmembrane region" description="Helical" evidence="2">
    <location>
        <begin position="42"/>
        <end position="62"/>
    </location>
</feature>
<feature type="topological domain" description="Cytoplasmic" evidence="2">
    <location>
        <begin position="63"/>
        <end position="86"/>
    </location>
</feature>
<feature type="transmembrane region" description="Helical" evidence="2">
    <location>
        <begin position="87"/>
        <end position="107"/>
    </location>
</feature>
<feature type="topological domain" description="Periplasmic" evidence="2">
    <location>
        <begin position="108"/>
        <end position="331"/>
    </location>
</feature>
<feature type="lipid moiety-binding region" description="N-palmitoyl cysteine" evidence="3">
    <location>
        <position position="24"/>
    </location>
</feature>
<feature type="lipid moiety-binding region" description="S-diacylglycerol cysteine" evidence="3">
    <location>
        <position position="24"/>
    </location>
</feature>